<proteinExistence type="inferred from homology"/>
<accession>E1W818</accession>
<accession>P30013</accession>
<accession>Q9L4I4</accession>
<organism>
    <name type="scientific">Salmonella typhimurium (strain SL1344)</name>
    <dbReference type="NCBI Taxonomy" id="216597"/>
    <lineage>
        <taxon>Bacteria</taxon>
        <taxon>Pseudomonadati</taxon>
        <taxon>Pseudomonadota</taxon>
        <taxon>Gammaproteobacteria</taxon>
        <taxon>Enterobacterales</taxon>
        <taxon>Enterobacteriaceae</taxon>
        <taxon>Salmonella</taxon>
    </lineage>
</organism>
<dbReference type="EC" id="3.5.1.28" evidence="1"/>
<dbReference type="EMBL" id="AJ242516">
    <property type="protein sequence ID" value="CAB89835.1"/>
    <property type="molecule type" value="Genomic_DNA"/>
</dbReference>
<dbReference type="EMBL" id="FQ312003">
    <property type="protein sequence ID" value="CBW16249.1"/>
    <property type="molecule type" value="Genomic_DNA"/>
</dbReference>
<dbReference type="RefSeq" id="WP_000936329.1">
    <property type="nucleotide sequence ID" value="NZ_QASL01000007.1"/>
</dbReference>
<dbReference type="SMR" id="E1W818"/>
<dbReference type="KEGG" id="sey:SL1344_0146"/>
<dbReference type="PATRIC" id="fig|216597.6.peg.162"/>
<dbReference type="HOGENOM" id="CLU_049290_1_0_6"/>
<dbReference type="BioCyc" id="SENT216597:SL1344_RS00745-MONOMER"/>
<dbReference type="Proteomes" id="UP000008962">
    <property type="component" value="Chromosome"/>
</dbReference>
<dbReference type="GO" id="GO:0005737">
    <property type="term" value="C:cytoplasm"/>
    <property type="evidence" value="ECO:0007669"/>
    <property type="project" value="UniProtKB-SubCell"/>
</dbReference>
<dbReference type="GO" id="GO:0046872">
    <property type="term" value="F:metal ion binding"/>
    <property type="evidence" value="ECO:0007669"/>
    <property type="project" value="UniProtKB-KW"/>
</dbReference>
<dbReference type="GO" id="GO:0008745">
    <property type="term" value="F:N-acetylmuramoyl-L-alanine amidase activity"/>
    <property type="evidence" value="ECO:0007669"/>
    <property type="project" value="UniProtKB-EC"/>
</dbReference>
<dbReference type="GO" id="GO:0071555">
    <property type="term" value="P:cell wall organization"/>
    <property type="evidence" value="ECO:0007669"/>
    <property type="project" value="UniProtKB-KW"/>
</dbReference>
<dbReference type="GO" id="GO:0009253">
    <property type="term" value="P:peptidoglycan catabolic process"/>
    <property type="evidence" value="ECO:0007669"/>
    <property type="project" value="InterPro"/>
</dbReference>
<dbReference type="GO" id="GO:0009254">
    <property type="term" value="P:peptidoglycan turnover"/>
    <property type="evidence" value="ECO:0007669"/>
    <property type="project" value="TreeGrafter"/>
</dbReference>
<dbReference type="CDD" id="cd06583">
    <property type="entry name" value="PGRP"/>
    <property type="match status" value="1"/>
</dbReference>
<dbReference type="FunFam" id="3.40.80.10:FF:000002">
    <property type="entry name" value="1,6-anhydro-N-acetylmuramyl-L-alanine amidase"/>
    <property type="match status" value="1"/>
</dbReference>
<dbReference type="Gene3D" id="3.40.80.10">
    <property type="entry name" value="Peptidoglycan recognition protein-like"/>
    <property type="match status" value="1"/>
</dbReference>
<dbReference type="InterPro" id="IPR036505">
    <property type="entry name" value="Amidase/PGRP_sf"/>
</dbReference>
<dbReference type="InterPro" id="IPR002502">
    <property type="entry name" value="Amidase_domain"/>
</dbReference>
<dbReference type="InterPro" id="IPR051206">
    <property type="entry name" value="NAMLAA_amidase_2"/>
</dbReference>
<dbReference type="NCBIfam" id="NF008758">
    <property type="entry name" value="PRK11789.1"/>
    <property type="match status" value="1"/>
</dbReference>
<dbReference type="PANTHER" id="PTHR30417:SF4">
    <property type="entry name" value="1,6-ANHYDRO-N-ACETYLMURAMYL-L-ALANINE AMIDASE AMPD"/>
    <property type="match status" value="1"/>
</dbReference>
<dbReference type="PANTHER" id="PTHR30417">
    <property type="entry name" value="N-ACETYLMURAMOYL-L-ALANINE AMIDASE AMID"/>
    <property type="match status" value="1"/>
</dbReference>
<dbReference type="Pfam" id="PF01510">
    <property type="entry name" value="Amidase_2"/>
    <property type="match status" value="1"/>
</dbReference>
<dbReference type="SMART" id="SM00644">
    <property type="entry name" value="Ami_2"/>
    <property type="match status" value="1"/>
</dbReference>
<dbReference type="SUPFAM" id="SSF55846">
    <property type="entry name" value="N-acetylmuramoyl-L-alanine amidase-like"/>
    <property type="match status" value="1"/>
</dbReference>
<evidence type="ECO:0000250" key="1">
    <source>
        <dbReference type="UniProtKB" id="P13016"/>
    </source>
</evidence>
<evidence type="ECO:0000250" key="2">
    <source>
        <dbReference type="UniProtKB" id="P75820"/>
    </source>
</evidence>
<evidence type="ECO:0000250" key="3">
    <source>
        <dbReference type="UniProtKB" id="P82974"/>
    </source>
</evidence>
<evidence type="ECO:0000255" key="4"/>
<evidence type="ECO:0000305" key="5"/>
<protein>
    <recommendedName>
        <fullName evidence="1">1,6-anhydro-N-acetylmuramyl-L-alanine amidase AmpD</fullName>
        <ecNumber evidence="1">3.5.1.28</ecNumber>
    </recommendedName>
    <alternativeName>
        <fullName evidence="1">N-acetylmuramoyl-L-alanine amidase</fullName>
    </alternativeName>
</protein>
<gene>
    <name type="primary">ampD</name>
    <name type="ordered locus">SL1344_0146</name>
</gene>
<reference key="1">
    <citation type="submission" date="1999-05" db="EMBL/GenBank/DDBJ databases">
        <title>Characterization of a Salmonella-specific region located between ampE and aroP genes.</title>
        <authorList>
            <person name="Cano D."/>
            <person name="Casadesus J."/>
            <person name="Garcia-del Portillo F."/>
        </authorList>
    </citation>
    <scope>NUCLEOTIDE SEQUENCE [GENOMIC DNA]</scope>
    <source>
        <strain>SL1344</strain>
    </source>
</reference>
<reference key="2">
    <citation type="journal article" date="2012" name="Proc. Natl. Acad. Sci. U.S.A.">
        <title>The transcriptional landscape and small RNAs of Salmonella enterica serovar Typhimurium.</title>
        <authorList>
            <person name="Kroger C."/>
            <person name="Dillon S.C."/>
            <person name="Cameron A.D."/>
            <person name="Papenfort K."/>
            <person name="Sivasankaran S.K."/>
            <person name="Hokamp K."/>
            <person name="Chao Y."/>
            <person name="Sittka A."/>
            <person name="Hebrard M."/>
            <person name="Handler K."/>
            <person name="Colgan A."/>
            <person name="Leekitcharoenphon P."/>
            <person name="Langridge G.C."/>
            <person name="Lohan A.J."/>
            <person name="Loftus B."/>
            <person name="Lucchini S."/>
            <person name="Ussery D.W."/>
            <person name="Dorman C.J."/>
            <person name="Thomson N.R."/>
            <person name="Vogel J."/>
            <person name="Hinton J.C."/>
        </authorList>
    </citation>
    <scope>NUCLEOTIDE SEQUENCE [LARGE SCALE GENOMIC DNA]</scope>
    <source>
        <strain>SL1344</strain>
    </source>
</reference>
<name>AMPD_SALTS</name>
<feature type="chain" id="PRO_0000405414" description="1,6-anhydro-N-acetylmuramyl-L-alanine amidase AmpD">
    <location>
        <begin position="1"/>
        <end position="187"/>
    </location>
</feature>
<feature type="domain" description="N-acetylmuramoyl-L-alanine amidase" evidence="4">
    <location>
        <begin position="29"/>
        <end position="167"/>
    </location>
</feature>
<feature type="active site" description="Proton acceptor" evidence="2">
    <location>
        <position position="116"/>
    </location>
</feature>
<feature type="binding site" evidence="3">
    <location>
        <position position="34"/>
    </location>
    <ligand>
        <name>Zn(2+)</name>
        <dbReference type="ChEBI" id="CHEBI:29105"/>
        <note>catalytic</note>
    </ligand>
</feature>
<feature type="binding site" evidence="3">
    <location>
        <position position="154"/>
    </location>
    <ligand>
        <name>Zn(2+)</name>
        <dbReference type="ChEBI" id="CHEBI:29105"/>
        <note>catalytic</note>
    </ligand>
</feature>
<feature type="binding site" evidence="3">
    <location>
        <position position="164"/>
    </location>
    <ligand>
        <name>Zn(2+)</name>
        <dbReference type="ChEBI" id="CHEBI:29105"/>
        <note>catalytic</note>
    </ligand>
</feature>
<feature type="site" description="Transition state stabilizer" evidence="2">
    <location>
        <position position="162"/>
    </location>
</feature>
<sequence length="187" mass="20913">MLPDKGWLVEARRVPSPHYDCRPDDEKPSLLVVHNISLPPGEFGGPWIDALFTGTIDPDAHPFFAEIAHLRVSAHCLIRRDGEIVQYVPFDKRAWHAGVSNYQGRERCNDFSIGIELEGTDTLAYTDAQYQQLAAVTRTLIASYPAIADNMTGHCNIAPDRKTDPGPAFDWPRFRALVALSSHKEMT</sequence>
<comment type="function">
    <text evidence="1">Involved in cell wall peptidoglycan recycling. Specifically cleaves the amide bond between the lactyl group of N-acetylmuramic acid and the alpha-amino group of the L-alanine in degradation products containing an anhydro N-acetylmuramyl moiety.</text>
</comment>
<comment type="catalytic activity">
    <reaction evidence="1">
        <text>Hydrolyzes the link between N-acetylmuramoyl residues and L-amino acid residues in certain cell-wall glycopeptides.</text>
        <dbReference type="EC" id="3.5.1.28"/>
    </reaction>
</comment>
<comment type="cofactor">
    <cofactor evidence="3">
        <name>Zn(2+)</name>
        <dbReference type="ChEBI" id="CHEBI:29105"/>
    </cofactor>
    <text evidence="3">Zn(2+) is required for amidase activity.</text>
</comment>
<comment type="subcellular location">
    <subcellularLocation>
        <location evidence="1">Cytoplasm</location>
    </subcellularLocation>
</comment>
<comment type="similarity">
    <text evidence="5">Belongs to the N-acetylmuramoyl-L-alanine amidase 2 family.</text>
</comment>
<keyword id="KW-0961">Cell wall biogenesis/degradation</keyword>
<keyword id="KW-0963">Cytoplasm</keyword>
<keyword id="KW-0378">Hydrolase</keyword>
<keyword id="KW-0479">Metal-binding</keyword>
<keyword id="KW-0862">Zinc</keyword>